<evidence type="ECO:0000255" key="1">
    <source>
        <dbReference type="HAMAP-Rule" id="MF_00344"/>
    </source>
</evidence>
<reference key="1">
    <citation type="submission" date="2005-07" db="EMBL/GenBank/DDBJ databases">
        <title>Complete sequence of Synechococcus sp. CC9605.</title>
        <authorList>
            <consortium name="US DOE Joint Genome Institute"/>
            <person name="Copeland A."/>
            <person name="Lucas S."/>
            <person name="Lapidus A."/>
            <person name="Barry K."/>
            <person name="Detter J.C."/>
            <person name="Glavina T."/>
            <person name="Hammon N."/>
            <person name="Israni S."/>
            <person name="Pitluck S."/>
            <person name="Schmutz J."/>
            <person name="Martinez M."/>
            <person name="Larimer F."/>
            <person name="Land M."/>
            <person name="Kyrpides N."/>
            <person name="Ivanova N."/>
            <person name="Richardson P."/>
        </authorList>
    </citation>
    <scope>NUCLEOTIDE SEQUENCE [LARGE SCALE GENOMIC DNA]</scope>
    <source>
        <strain>CC9605</strain>
    </source>
</reference>
<proteinExistence type="inferred from homology"/>
<gene>
    <name evidence="1" type="primary">guaA</name>
    <name type="ordered locus">Syncc9605_0046</name>
</gene>
<comment type="function">
    <text evidence="1">Catalyzes the synthesis of GMP from XMP.</text>
</comment>
<comment type="catalytic activity">
    <reaction evidence="1">
        <text>XMP + L-glutamine + ATP + H2O = GMP + L-glutamate + AMP + diphosphate + 2 H(+)</text>
        <dbReference type="Rhea" id="RHEA:11680"/>
        <dbReference type="ChEBI" id="CHEBI:15377"/>
        <dbReference type="ChEBI" id="CHEBI:15378"/>
        <dbReference type="ChEBI" id="CHEBI:29985"/>
        <dbReference type="ChEBI" id="CHEBI:30616"/>
        <dbReference type="ChEBI" id="CHEBI:33019"/>
        <dbReference type="ChEBI" id="CHEBI:57464"/>
        <dbReference type="ChEBI" id="CHEBI:58115"/>
        <dbReference type="ChEBI" id="CHEBI:58359"/>
        <dbReference type="ChEBI" id="CHEBI:456215"/>
        <dbReference type="EC" id="6.3.5.2"/>
    </reaction>
</comment>
<comment type="pathway">
    <text evidence="1">Purine metabolism; GMP biosynthesis; GMP from XMP (L-Gln route): step 1/1.</text>
</comment>
<comment type="subunit">
    <text evidence="1">Homodimer.</text>
</comment>
<feature type="chain" id="PRO_1000120442" description="GMP synthase [glutamine-hydrolyzing]">
    <location>
        <begin position="1"/>
        <end position="528"/>
    </location>
</feature>
<feature type="domain" description="Glutamine amidotransferase type-1" evidence="1">
    <location>
        <begin position="13"/>
        <end position="204"/>
    </location>
</feature>
<feature type="domain" description="GMPS ATP-PPase" evidence="1">
    <location>
        <begin position="205"/>
        <end position="403"/>
    </location>
</feature>
<feature type="active site" description="Nucleophile" evidence="1">
    <location>
        <position position="90"/>
    </location>
</feature>
<feature type="active site" evidence="1">
    <location>
        <position position="178"/>
    </location>
</feature>
<feature type="active site" evidence="1">
    <location>
        <position position="180"/>
    </location>
</feature>
<feature type="binding site" evidence="1">
    <location>
        <begin position="232"/>
        <end position="238"/>
    </location>
    <ligand>
        <name>ATP</name>
        <dbReference type="ChEBI" id="CHEBI:30616"/>
    </ligand>
</feature>
<protein>
    <recommendedName>
        <fullName evidence="1">GMP synthase [glutamine-hydrolyzing]</fullName>
        <ecNumber evidence="1">6.3.5.2</ecNumber>
    </recommendedName>
    <alternativeName>
        <fullName evidence="1">GMP synthetase</fullName>
    </alternativeName>
    <alternativeName>
        <fullName evidence="1">Glutamine amidotransferase</fullName>
    </alternativeName>
</protein>
<organism>
    <name type="scientific">Synechococcus sp. (strain CC9605)</name>
    <dbReference type="NCBI Taxonomy" id="110662"/>
    <lineage>
        <taxon>Bacteria</taxon>
        <taxon>Bacillati</taxon>
        <taxon>Cyanobacteriota</taxon>
        <taxon>Cyanophyceae</taxon>
        <taxon>Synechococcales</taxon>
        <taxon>Synechococcaceae</taxon>
        <taxon>Synechococcus</taxon>
    </lineage>
</organism>
<name>GUAA_SYNSC</name>
<dbReference type="EC" id="6.3.5.2" evidence="1"/>
<dbReference type="EMBL" id="CP000110">
    <property type="protein sequence ID" value="ABB33825.1"/>
    <property type="molecule type" value="Genomic_DNA"/>
</dbReference>
<dbReference type="RefSeq" id="WP_011363087.1">
    <property type="nucleotide sequence ID" value="NC_007516.1"/>
</dbReference>
<dbReference type="SMR" id="Q3ANK7"/>
<dbReference type="STRING" id="110662.Syncc9605_0046"/>
<dbReference type="MEROPS" id="C26.957"/>
<dbReference type="KEGG" id="syd:Syncc9605_0046"/>
<dbReference type="eggNOG" id="COG0518">
    <property type="taxonomic scope" value="Bacteria"/>
</dbReference>
<dbReference type="eggNOG" id="COG0519">
    <property type="taxonomic scope" value="Bacteria"/>
</dbReference>
<dbReference type="HOGENOM" id="CLU_014340_0_5_3"/>
<dbReference type="OrthoDB" id="9802219at2"/>
<dbReference type="UniPathway" id="UPA00189">
    <property type="reaction ID" value="UER00296"/>
</dbReference>
<dbReference type="GO" id="GO:0005829">
    <property type="term" value="C:cytosol"/>
    <property type="evidence" value="ECO:0007669"/>
    <property type="project" value="TreeGrafter"/>
</dbReference>
<dbReference type="GO" id="GO:0005524">
    <property type="term" value="F:ATP binding"/>
    <property type="evidence" value="ECO:0007669"/>
    <property type="project" value="UniProtKB-UniRule"/>
</dbReference>
<dbReference type="GO" id="GO:0003921">
    <property type="term" value="F:GMP synthase activity"/>
    <property type="evidence" value="ECO:0007669"/>
    <property type="project" value="InterPro"/>
</dbReference>
<dbReference type="CDD" id="cd01742">
    <property type="entry name" value="GATase1_GMP_Synthase"/>
    <property type="match status" value="1"/>
</dbReference>
<dbReference type="CDD" id="cd01997">
    <property type="entry name" value="GMP_synthase_C"/>
    <property type="match status" value="1"/>
</dbReference>
<dbReference type="FunFam" id="3.30.300.10:FF:000002">
    <property type="entry name" value="GMP synthase [glutamine-hydrolyzing]"/>
    <property type="match status" value="1"/>
</dbReference>
<dbReference type="FunFam" id="3.40.50.620:FF:000001">
    <property type="entry name" value="GMP synthase [glutamine-hydrolyzing]"/>
    <property type="match status" value="1"/>
</dbReference>
<dbReference type="FunFam" id="3.40.50.880:FF:000001">
    <property type="entry name" value="GMP synthase [glutamine-hydrolyzing]"/>
    <property type="match status" value="1"/>
</dbReference>
<dbReference type="Gene3D" id="3.30.300.10">
    <property type="match status" value="1"/>
</dbReference>
<dbReference type="Gene3D" id="3.40.50.880">
    <property type="match status" value="1"/>
</dbReference>
<dbReference type="Gene3D" id="3.40.50.620">
    <property type="entry name" value="HUPs"/>
    <property type="match status" value="1"/>
</dbReference>
<dbReference type="HAMAP" id="MF_00344">
    <property type="entry name" value="GMP_synthase"/>
    <property type="match status" value="1"/>
</dbReference>
<dbReference type="InterPro" id="IPR029062">
    <property type="entry name" value="Class_I_gatase-like"/>
</dbReference>
<dbReference type="InterPro" id="IPR017926">
    <property type="entry name" value="GATASE"/>
</dbReference>
<dbReference type="InterPro" id="IPR001674">
    <property type="entry name" value="GMP_synth_C"/>
</dbReference>
<dbReference type="InterPro" id="IPR004739">
    <property type="entry name" value="GMP_synth_GATase"/>
</dbReference>
<dbReference type="InterPro" id="IPR022955">
    <property type="entry name" value="GMP_synthase"/>
</dbReference>
<dbReference type="InterPro" id="IPR025777">
    <property type="entry name" value="GMPS_ATP_PPase_dom"/>
</dbReference>
<dbReference type="InterPro" id="IPR014729">
    <property type="entry name" value="Rossmann-like_a/b/a_fold"/>
</dbReference>
<dbReference type="NCBIfam" id="TIGR00884">
    <property type="entry name" value="guaA_Cterm"/>
    <property type="match status" value="1"/>
</dbReference>
<dbReference type="NCBIfam" id="TIGR00888">
    <property type="entry name" value="guaA_Nterm"/>
    <property type="match status" value="1"/>
</dbReference>
<dbReference type="NCBIfam" id="NF000848">
    <property type="entry name" value="PRK00074.1"/>
    <property type="match status" value="1"/>
</dbReference>
<dbReference type="PANTHER" id="PTHR11922:SF2">
    <property type="entry name" value="GMP SYNTHASE [GLUTAMINE-HYDROLYZING]"/>
    <property type="match status" value="1"/>
</dbReference>
<dbReference type="PANTHER" id="PTHR11922">
    <property type="entry name" value="GMP SYNTHASE-RELATED"/>
    <property type="match status" value="1"/>
</dbReference>
<dbReference type="Pfam" id="PF00117">
    <property type="entry name" value="GATase"/>
    <property type="match status" value="1"/>
</dbReference>
<dbReference type="Pfam" id="PF00958">
    <property type="entry name" value="GMP_synt_C"/>
    <property type="match status" value="1"/>
</dbReference>
<dbReference type="PRINTS" id="PR00097">
    <property type="entry name" value="ANTSNTHASEII"/>
</dbReference>
<dbReference type="PRINTS" id="PR00099">
    <property type="entry name" value="CPSGATASE"/>
</dbReference>
<dbReference type="PRINTS" id="PR00096">
    <property type="entry name" value="GATASE"/>
</dbReference>
<dbReference type="SUPFAM" id="SSF52402">
    <property type="entry name" value="Adenine nucleotide alpha hydrolases-like"/>
    <property type="match status" value="1"/>
</dbReference>
<dbReference type="SUPFAM" id="SSF52317">
    <property type="entry name" value="Class I glutamine amidotransferase-like"/>
    <property type="match status" value="1"/>
</dbReference>
<dbReference type="SUPFAM" id="SSF54810">
    <property type="entry name" value="GMP synthetase C-terminal dimerisation domain"/>
    <property type="match status" value="1"/>
</dbReference>
<dbReference type="PROSITE" id="PS51273">
    <property type="entry name" value="GATASE_TYPE_1"/>
    <property type="match status" value="1"/>
</dbReference>
<dbReference type="PROSITE" id="PS51553">
    <property type="entry name" value="GMPS_ATP_PPASE"/>
    <property type="match status" value="1"/>
</dbReference>
<accession>Q3ANK7</accession>
<keyword id="KW-0067">ATP-binding</keyword>
<keyword id="KW-0315">Glutamine amidotransferase</keyword>
<keyword id="KW-0332">GMP biosynthesis</keyword>
<keyword id="KW-0436">Ligase</keyword>
<keyword id="KW-0547">Nucleotide-binding</keyword>
<keyword id="KW-0658">Purine biosynthesis</keyword>
<sequence>MSQPSSDTQRQPAIVILDFGSQYSELIARRVRETEVFSVVLGYSTSAEELRRMAPKGIILSGGPSSVYAEHAPLCDPGIWDLGIPVLGVCYGMQLMVQQLGGVVEAATGKAEYGKAPLEVDDPTDLLTNVDNGSTMWMSHGDSVKALPEGFVRLAHTANTPEAAVAHLQRKLYGVQFHPEVVHSTCGMALIRNFVYHVCGCDPDWTTAAFIDEAVALVREQVGDKRVLLALSGGVDSSTLAFLLKKAIGDQLTCMFIDQGFMRKGEPEFLMDFFDRKFNIHVEYINARQRFIGKLEGITDPEEKRKIIGTEFIRVFEEESKRLGPFDYLAQGTLYPDVIESAGTNVDPKTGERVAVKIKSHHNVGGLPKDLQFKLVEPLRKLFKDEVRKVGRSLGLPEEIVRRHPFPGPGLAIRILGEVTDEKLDCLRDADLIVRQEIKEAGLYHDIWQAFAVLLPVRSVGVMGDKRTYAWPIVLRCVSSEDGMTADWSRLPYDLMETISNRIVNEVKGVNRVVLDITSKPPGTIEWE</sequence>